<keyword id="KW-1267">Proteomics identification</keyword>
<keyword id="KW-1185">Reference proteome</keyword>
<organism>
    <name type="scientific">Homo sapiens</name>
    <name type="common">Human</name>
    <dbReference type="NCBI Taxonomy" id="9606"/>
    <lineage>
        <taxon>Eukaryota</taxon>
        <taxon>Metazoa</taxon>
        <taxon>Chordata</taxon>
        <taxon>Craniata</taxon>
        <taxon>Vertebrata</taxon>
        <taxon>Euteleostomi</taxon>
        <taxon>Mammalia</taxon>
        <taxon>Eutheria</taxon>
        <taxon>Euarchontoglires</taxon>
        <taxon>Primates</taxon>
        <taxon>Haplorrhini</taxon>
        <taxon>Catarrhini</taxon>
        <taxon>Hominidae</taxon>
        <taxon>Homo</taxon>
    </lineage>
</organism>
<feature type="chain" id="PRO_0000344460" description="Transcription factor SPT20 homolog-like 2">
    <location>
        <begin position="1"/>
        <end position="817"/>
    </location>
</feature>
<feature type="region of interest" description="Disordered" evidence="1">
    <location>
        <begin position="1"/>
        <end position="28"/>
    </location>
</feature>
<feature type="region of interest" description="Disordered" evidence="1">
    <location>
        <begin position="249"/>
        <end position="275"/>
    </location>
</feature>
<feature type="region of interest" description="Disordered" evidence="1">
    <location>
        <begin position="369"/>
        <end position="553"/>
    </location>
</feature>
<feature type="region of interest" description="Disordered" evidence="1">
    <location>
        <begin position="598"/>
        <end position="630"/>
    </location>
</feature>
<feature type="region of interest" description="Disordered" evidence="1">
    <location>
        <begin position="675"/>
        <end position="697"/>
    </location>
</feature>
<feature type="compositionally biased region" description="Basic and acidic residues" evidence="1">
    <location>
        <begin position="1"/>
        <end position="14"/>
    </location>
</feature>
<feature type="compositionally biased region" description="Polar residues" evidence="1">
    <location>
        <begin position="423"/>
        <end position="440"/>
    </location>
</feature>
<feature type="compositionally biased region" description="Low complexity" evidence="1">
    <location>
        <begin position="469"/>
        <end position="479"/>
    </location>
</feature>
<feature type="compositionally biased region" description="Low complexity" evidence="1">
    <location>
        <begin position="494"/>
        <end position="505"/>
    </location>
</feature>
<feature type="compositionally biased region" description="Low complexity" evidence="1">
    <location>
        <begin position="513"/>
        <end position="531"/>
    </location>
</feature>
<feature type="compositionally biased region" description="Low complexity" evidence="1">
    <location>
        <begin position="598"/>
        <end position="618"/>
    </location>
</feature>
<name>SP202_HUMAN</name>
<accession>P0C7V6</accession>
<gene>
    <name type="primary">SUPT20HL2</name>
    <name type="synonym">FAM48B2</name>
</gene>
<protein>
    <recommendedName>
        <fullName>Transcription factor SPT20 homolog-like 2</fullName>
    </recommendedName>
</protein>
<dbReference type="EMBL" id="AC096509">
    <property type="status" value="NOT_ANNOTATED_CDS"/>
    <property type="molecule type" value="Genomic_DNA"/>
</dbReference>
<dbReference type="CCDS" id="CCDS94580.1"/>
<dbReference type="RefSeq" id="NP_001129705.3">
    <property type="nucleotide sequence ID" value="NM_001136233.3"/>
</dbReference>
<dbReference type="SMR" id="P0C7V6"/>
<dbReference type="GlyGen" id="P0C7V6">
    <property type="glycosylation" value="1 site"/>
</dbReference>
<dbReference type="iPTMnet" id="P0C7V6"/>
<dbReference type="PhosphoSitePlus" id="P0C7V6"/>
<dbReference type="BioMuta" id="HGNC:31797"/>
<dbReference type="DMDM" id="206557847"/>
<dbReference type="MassIVE" id="P0C7V6"/>
<dbReference type="PeptideAtlas" id="P0C7V6"/>
<dbReference type="ProteomicsDB" id="52376"/>
<dbReference type="DNASU" id="170067"/>
<dbReference type="Ensembl" id="ENST00000486479.3">
    <property type="protein sequence ID" value="ENSP00000503941.1"/>
    <property type="gene ID" value="ENSG00000223611.7"/>
</dbReference>
<dbReference type="GeneID" id="170067"/>
<dbReference type="KEGG" id="hsa:170067"/>
<dbReference type="MANE-Select" id="ENST00000486479.3">
    <property type="protein sequence ID" value="ENSP00000503941.1"/>
    <property type="RefSeq nucleotide sequence ID" value="NM_001136233.3"/>
    <property type="RefSeq protein sequence ID" value="NP_001129705.3"/>
</dbReference>
<dbReference type="AGR" id="HGNC:31797"/>
<dbReference type="CTD" id="170067"/>
<dbReference type="GeneCards" id="SUPT20HL2"/>
<dbReference type="HGNC" id="HGNC:31797">
    <property type="gene designation" value="SUPT20HL2"/>
</dbReference>
<dbReference type="HPA" id="ENSG00000223611">
    <property type="expression patterns" value="Tissue enhanced (skeletal muscle, testis)"/>
</dbReference>
<dbReference type="neXtProt" id="NX_P0C7V6"/>
<dbReference type="PharmGKB" id="PA134896852"/>
<dbReference type="VEuPathDB" id="HostDB:ENSG00000223611"/>
<dbReference type="GeneTree" id="ENSGT00390000013549"/>
<dbReference type="InParanoid" id="P0C7V6"/>
<dbReference type="OMA" id="HAWEAGC"/>
<dbReference type="OrthoDB" id="1932706at2759"/>
<dbReference type="PAN-GO" id="P0C7V6">
    <property type="GO annotations" value="3 GO annotations based on evolutionary models"/>
</dbReference>
<dbReference type="PhylomeDB" id="P0C7V6"/>
<dbReference type="PathwayCommons" id="P0C7V6"/>
<dbReference type="BioGRID-ORCS" id="170067">
    <property type="hits" value="10 hits in 235 CRISPR screens"/>
</dbReference>
<dbReference type="GenomeRNAi" id="170067"/>
<dbReference type="Pharos" id="P0C7V6">
    <property type="development level" value="Tdark"/>
</dbReference>
<dbReference type="Proteomes" id="UP000005640">
    <property type="component" value="Chromosome X"/>
</dbReference>
<dbReference type="RNAct" id="P0C7V6">
    <property type="molecule type" value="protein"/>
</dbReference>
<dbReference type="Bgee" id="ENSG00000223611">
    <property type="expression patterns" value="Expressed in male germ line stem cell (sensu Vertebrata) in testis and 19 other cell types or tissues"/>
</dbReference>
<dbReference type="GO" id="GO:0005615">
    <property type="term" value="C:extracellular space"/>
    <property type="evidence" value="ECO:0007005"/>
    <property type="project" value="UniProtKB"/>
</dbReference>
<dbReference type="GO" id="GO:0000124">
    <property type="term" value="C:SAGA complex"/>
    <property type="evidence" value="ECO:0000318"/>
    <property type="project" value="GO_Central"/>
</dbReference>
<dbReference type="GO" id="GO:0003712">
    <property type="term" value="F:transcription coregulator activity"/>
    <property type="evidence" value="ECO:0000318"/>
    <property type="project" value="GO_Central"/>
</dbReference>
<dbReference type="GO" id="GO:0006357">
    <property type="term" value="P:regulation of transcription by RNA polymerase II"/>
    <property type="evidence" value="ECO:0000318"/>
    <property type="project" value="GO_Central"/>
</dbReference>
<dbReference type="InterPro" id="IPR021950">
    <property type="entry name" value="Spt20"/>
</dbReference>
<dbReference type="InterPro" id="IPR046468">
    <property type="entry name" value="Spt20-like_SEP"/>
</dbReference>
<dbReference type="PANTHER" id="PTHR13526">
    <property type="entry name" value="TRANSCRIPTION FACTOR SPT20 HOMOLOG"/>
    <property type="match status" value="1"/>
</dbReference>
<dbReference type="PANTHER" id="PTHR13526:SF24">
    <property type="entry name" value="TRANSCRIPTION FACTOR SPT20 HOMOLOG-LIKE 2-RELATED"/>
    <property type="match status" value="1"/>
</dbReference>
<dbReference type="Pfam" id="PF12090">
    <property type="entry name" value="Spt20_SEP"/>
    <property type="match status" value="1"/>
</dbReference>
<evidence type="ECO:0000256" key="1">
    <source>
        <dbReference type="SAM" id="MobiDB-lite"/>
    </source>
</evidence>
<evidence type="ECO:0000305" key="2"/>
<sequence>MDRDLEQALDRTENITEIAQQRRPRRRYSPRAGKTLQEKLYDIYVEECGKEPEDPQELRSNVNLLEKLVRRESLPCLLVNLYPGNQGYSVMLQREDGSFAETIRLPYEERALLDYLDAEELPPALGDVLDKASVNIFHSGCVIVEVRDYRQSSNMQPPGYQSRHILLRPTMQTLAPEVKTMTRDGEKWSQEDKFPLESQLILATAEPLCLDPSVAVACTANRLLYNKQKMNTDPMEQCLQRYSWPSVKPQQEQSDCPPPPELRVSTSGQKEERKVGQPCELNITKAGSCVDTWKGRPCDLAVPSEVDVEKLAKGYQSVTAADPQLPVWPAQEVEDPFRHAWEAGCQAWDTKPNIMQSFNDPLLCGKIRPRKKARQKSQKSPWQPFPDDHSACLRPGSETDAGRAVSQAQESVQSKVKGPGKMSHSSSGPASVSQLSSWKTPEQPDPVWVQSSVSGKGEKHPPPRTQLPSSSGKISSGNSFPPQQAGSPLKRPFPAAAPAVAAAAPAPAPAPAAAPALAAAAVAAAAGGAAPSHSQKPSVPLIKASRRRPAAGRPTRFVKIAPAIQVRTGSTGLKATNVEGPVRGAQVLGCSFKPVQAPGSGAPAPAGISGSGLQSSGGPLPDARPGAVQASSPAPLQFFLNTPEGLRPLTLQVPQGWAVLTGPQQQSHQLVSLQQLQQPTAAHPPQPGPQGSTLGLSTQGQAFPAQQLLNVNLTGAGSGLQPQPQAAVLSLLGSAQVPQQGVQLPFVLGQQPQPLLLLQPQPQPQQIQLQTQPLRVLQQPVFLATGAVQIVQPHPGVQAGSQLVGQRKGGKPTPPAP</sequence>
<comment type="similarity">
    <text evidence="2">Belongs to the SPT20 family.</text>
</comment>
<proteinExistence type="evidence at protein level"/>
<reference key="1">
    <citation type="journal article" date="2005" name="Nature">
        <title>The DNA sequence of the human X chromosome.</title>
        <authorList>
            <person name="Ross M.T."/>
            <person name="Grafham D.V."/>
            <person name="Coffey A.J."/>
            <person name="Scherer S."/>
            <person name="McLay K."/>
            <person name="Muzny D."/>
            <person name="Platzer M."/>
            <person name="Howell G.R."/>
            <person name="Burrows C."/>
            <person name="Bird C.P."/>
            <person name="Frankish A."/>
            <person name="Lovell F.L."/>
            <person name="Howe K.L."/>
            <person name="Ashurst J.L."/>
            <person name="Fulton R.S."/>
            <person name="Sudbrak R."/>
            <person name="Wen G."/>
            <person name="Jones M.C."/>
            <person name="Hurles M.E."/>
            <person name="Andrews T.D."/>
            <person name="Scott C.E."/>
            <person name="Searle S."/>
            <person name="Ramser J."/>
            <person name="Whittaker A."/>
            <person name="Deadman R."/>
            <person name="Carter N.P."/>
            <person name="Hunt S.E."/>
            <person name="Chen R."/>
            <person name="Cree A."/>
            <person name="Gunaratne P."/>
            <person name="Havlak P."/>
            <person name="Hodgson A."/>
            <person name="Metzker M.L."/>
            <person name="Richards S."/>
            <person name="Scott G."/>
            <person name="Steffen D."/>
            <person name="Sodergren E."/>
            <person name="Wheeler D.A."/>
            <person name="Worley K.C."/>
            <person name="Ainscough R."/>
            <person name="Ambrose K.D."/>
            <person name="Ansari-Lari M.A."/>
            <person name="Aradhya S."/>
            <person name="Ashwell R.I."/>
            <person name="Babbage A.K."/>
            <person name="Bagguley C.L."/>
            <person name="Ballabio A."/>
            <person name="Banerjee R."/>
            <person name="Barker G.E."/>
            <person name="Barlow K.F."/>
            <person name="Barrett I.P."/>
            <person name="Bates K.N."/>
            <person name="Beare D.M."/>
            <person name="Beasley H."/>
            <person name="Beasley O."/>
            <person name="Beck A."/>
            <person name="Bethel G."/>
            <person name="Blechschmidt K."/>
            <person name="Brady N."/>
            <person name="Bray-Allen S."/>
            <person name="Bridgeman A.M."/>
            <person name="Brown A.J."/>
            <person name="Brown M.J."/>
            <person name="Bonnin D."/>
            <person name="Bruford E.A."/>
            <person name="Buhay C."/>
            <person name="Burch P."/>
            <person name="Burford D."/>
            <person name="Burgess J."/>
            <person name="Burrill W."/>
            <person name="Burton J."/>
            <person name="Bye J.M."/>
            <person name="Carder C."/>
            <person name="Carrel L."/>
            <person name="Chako J."/>
            <person name="Chapman J.C."/>
            <person name="Chavez D."/>
            <person name="Chen E."/>
            <person name="Chen G."/>
            <person name="Chen Y."/>
            <person name="Chen Z."/>
            <person name="Chinault C."/>
            <person name="Ciccodicola A."/>
            <person name="Clark S.Y."/>
            <person name="Clarke G."/>
            <person name="Clee C.M."/>
            <person name="Clegg S."/>
            <person name="Clerc-Blankenburg K."/>
            <person name="Clifford K."/>
            <person name="Cobley V."/>
            <person name="Cole C.G."/>
            <person name="Conquer J.S."/>
            <person name="Corby N."/>
            <person name="Connor R.E."/>
            <person name="David R."/>
            <person name="Davies J."/>
            <person name="Davis C."/>
            <person name="Davis J."/>
            <person name="Delgado O."/>
            <person name="Deshazo D."/>
            <person name="Dhami P."/>
            <person name="Ding Y."/>
            <person name="Dinh H."/>
            <person name="Dodsworth S."/>
            <person name="Draper H."/>
            <person name="Dugan-Rocha S."/>
            <person name="Dunham A."/>
            <person name="Dunn M."/>
            <person name="Durbin K.J."/>
            <person name="Dutta I."/>
            <person name="Eades T."/>
            <person name="Ellwood M."/>
            <person name="Emery-Cohen A."/>
            <person name="Errington H."/>
            <person name="Evans K.L."/>
            <person name="Faulkner L."/>
            <person name="Francis F."/>
            <person name="Frankland J."/>
            <person name="Fraser A.E."/>
            <person name="Galgoczy P."/>
            <person name="Gilbert J."/>
            <person name="Gill R."/>
            <person name="Gloeckner G."/>
            <person name="Gregory S.G."/>
            <person name="Gribble S."/>
            <person name="Griffiths C."/>
            <person name="Grocock R."/>
            <person name="Gu Y."/>
            <person name="Gwilliam R."/>
            <person name="Hamilton C."/>
            <person name="Hart E.A."/>
            <person name="Hawes A."/>
            <person name="Heath P.D."/>
            <person name="Heitmann K."/>
            <person name="Hennig S."/>
            <person name="Hernandez J."/>
            <person name="Hinzmann B."/>
            <person name="Ho S."/>
            <person name="Hoffs M."/>
            <person name="Howden P.J."/>
            <person name="Huckle E.J."/>
            <person name="Hume J."/>
            <person name="Hunt P.J."/>
            <person name="Hunt A.R."/>
            <person name="Isherwood J."/>
            <person name="Jacob L."/>
            <person name="Johnson D."/>
            <person name="Jones S."/>
            <person name="de Jong P.J."/>
            <person name="Joseph S.S."/>
            <person name="Keenan S."/>
            <person name="Kelly S."/>
            <person name="Kershaw J.K."/>
            <person name="Khan Z."/>
            <person name="Kioschis P."/>
            <person name="Klages S."/>
            <person name="Knights A.J."/>
            <person name="Kosiura A."/>
            <person name="Kovar-Smith C."/>
            <person name="Laird G.K."/>
            <person name="Langford C."/>
            <person name="Lawlor S."/>
            <person name="Leversha M."/>
            <person name="Lewis L."/>
            <person name="Liu W."/>
            <person name="Lloyd C."/>
            <person name="Lloyd D.M."/>
            <person name="Loulseged H."/>
            <person name="Loveland J.E."/>
            <person name="Lovell J.D."/>
            <person name="Lozado R."/>
            <person name="Lu J."/>
            <person name="Lyne R."/>
            <person name="Ma J."/>
            <person name="Maheshwari M."/>
            <person name="Matthews L.H."/>
            <person name="McDowall J."/>
            <person name="McLaren S."/>
            <person name="McMurray A."/>
            <person name="Meidl P."/>
            <person name="Meitinger T."/>
            <person name="Milne S."/>
            <person name="Miner G."/>
            <person name="Mistry S.L."/>
            <person name="Morgan M."/>
            <person name="Morris S."/>
            <person name="Mueller I."/>
            <person name="Mullikin J.C."/>
            <person name="Nguyen N."/>
            <person name="Nordsiek G."/>
            <person name="Nyakatura G."/>
            <person name="O'dell C.N."/>
            <person name="Okwuonu G."/>
            <person name="Palmer S."/>
            <person name="Pandian R."/>
            <person name="Parker D."/>
            <person name="Parrish J."/>
            <person name="Pasternak S."/>
            <person name="Patel D."/>
            <person name="Pearce A.V."/>
            <person name="Pearson D.M."/>
            <person name="Pelan S.E."/>
            <person name="Perez L."/>
            <person name="Porter K.M."/>
            <person name="Ramsey Y."/>
            <person name="Reichwald K."/>
            <person name="Rhodes S."/>
            <person name="Ridler K.A."/>
            <person name="Schlessinger D."/>
            <person name="Schueler M.G."/>
            <person name="Sehra H.K."/>
            <person name="Shaw-Smith C."/>
            <person name="Shen H."/>
            <person name="Sheridan E.M."/>
            <person name="Shownkeen R."/>
            <person name="Skuce C.D."/>
            <person name="Smith M.L."/>
            <person name="Sotheran E.C."/>
            <person name="Steingruber H.E."/>
            <person name="Steward C.A."/>
            <person name="Storey R."/>
            <person name="Swann R.M."/>
            <person name="Swarbreck D."/>
            <person name="Tabor P.E."/>
            <person name="Taudien S."/>
            <person name="Taylor T."/>
            <person name="Teague B."/>
            <person name="Thomas K."/>
            <person name="Thorpe A."/>
            <person name="Timms K."/>
            <person name="Tracey A."/>
            <person name="Trevanion S."/>
            <person name="Tromans A.C."/>
            <person name="d'Urso M."/>
            <person name="Verduzco D."/>
            <person name="Villasana D."/>
            <person name="Waldron L."/>
            <person name="Wall M."/>
            <person name="Wang Q."/>
            <person name="Warren J."/>
            <person name="Warry G.L."/>
            <person name="Wei X."/>
            <person name="West A."/>
            <person name="Whitehead S.L."/>
            <person name="Whiteley M.N."/>
            <person name="Wilkinson J.E."/>
            <person name="Willey D.L."/>
            <person name="Williams G."/>
            <person name="Williams L."/>
            <person name="Williamson A."/>
            <person name="Williamson H."/>
            <person name="Wilming L."/>
            <person name="Woodmansey R.L."/>
            <person name="Wray P.W."/>
            <person name="Yen J."/>
            <person name="Zhang J."/>
            <person name="Zhou J."/>
            <person name="Zoghbi H."/>
            <person name="Zorilla S."/>
            <person name="Buck D."/>
            <person name="Reinhardt R."/>
            <person name="Poustka A."/>
            <person name="Rosenthal A."/>
            <person name="Lehrach H."/>
            <person name="Meindl A."/>
            <person name="Minx P.J."/>
            <person name="Hillier L.W."/>
            <person name="Willard H.F."/>
            <person name="Wilson R.K."/>
            <person name="Waterston R.H."/>
            <person name="Rice C.M."/>
            <person name="Vaudin M."/>
            <person name="Coulson A."/>
            <person name="Nelson D.L."/>
            <person name="Weinstock G."/>
            <person name="Sulston J.E."/>
            <person name="Durbin R.M."/>
            <person name="Hubbard T."/>
            <person name="Gibbs R.A."/>
            <person name="Beck S."/>
            <person name="Rogers J."/>
            <person name="Bentley D.R."/>
        </authorList>
    </citation>
    <scope>NUCLEOTIDE SEQUENCE [LARGE SCALE GENOMIC DNA]</scope>
</reference>